<comment type="function">
    <text evidence="1">Fluoride-specific ion channel. Important for reducing fluoride concentration in the cell, thus reducing its toxicity.</text>
</comment>
<comment type="catalytic activity">
    <reaction evidence="1">
        <text>fluoride(in) = fluoride(out)</text>
        <dbReference type="Rhea" id="RHEA:76159"/>
        <dbReference type="ChEBI" id="CHEBI:17051"/>
    </reaction>
    <physiologicalReaction direction="left-to-right" evidence="1">
        <dbReference type="Rhea" id="RHEA:76160"/>
    </physiologicalReaction>
</comment>
<comment type="activity regulation">
    <text evidence="1">Na(+) is not transported, but it plays an essential structural role and its presence is essential for fluoride channel function.</text>
</comment>
<comment type="subcellular location">
    <subcellularLocation>
        <location evidence="1">Cell inner membrane</location>
        <topology evidence="1">Multi-pass membrane protein</topology>
    </subcellularLocation>
</comment>
<comment type="similarity">
    <text evidence="1">Belongs to the fluoride channel Fluc/FEX (TC 1.A.43) family.</text>
</comment>
<protein>
    <recommendedName>
        <fullName evidence="1">Fluoride-specific ion channel FluC</fullName>
    </recommendedName>
</protein>
<accession>B8EET6</accession>
<sequence>MNNLLLVALGGSIGAVFRYLISIFMIQVFGSSFPFGTLLVNVLGSFLMGVIYALGQMSHISPEFKALIGIGLLGALTTFSTFSNETLLLLQEGDWLKATLNVVLNLSLCLFMVYLGQQLVFSRI</sequence>
<gene>
    <name evidence="1" type="primary">fluC</name>
    <name evidence="1" type="synonym">crcB</name>
    <name type="ordered locus">Sbal223_2194</name>
</gene>
<evidence type="ECO:0000255" key="1">
    <source>
        <dbReference type="HAMAP-Rule" id="MF_00454"/>
    </source>
</evidence>
<feature type="chain" id="PRO_1000135328" description="Fluoride-specific ion channel FluC">
    <location>
        <begin position="1"/>
        <end position="124"/>
    </location>
</feature>
<feature type="transmembrane region" description="Helical" evidence="1">
    <location>
        <begin position="4"/>
        <end position="24"/>
    </location>
</feature>
<feature type="transmembrane region" description="Helical" evidence="1">
    <location>
        <begin position="35"/>
        <end position="55"/>
    </location>
</feature>
<feature type="transmembrane region" description="Helical" evidence="1">
    <location>
        <begin position="60"/>
        <end position="80"/>
    </location>
</feature>
<feature type="transmembrane region" description="Helical" evidence="1">
    <location>
        <begin position="102"/>
        <end position="122"/>
    </location>
</feature>
<feature type="binding site" evidence="1">
    <location>
        <position position="74"/>
    </location>
    <ligand>
        <name>Na(+)</name>
        <dbReference type="ChEBI" id="CHEBI:29101"/>
        <note>structural</note>
    </ligand>
</feature>
<feature type="binding site" evidence="1">
    <location>
        <position position="77"/>
    </location>
    <ligand>
        <name>Na(+)</name>
        <dbReference type="ChEBI" id="CHEBI:29101"/>
        <note>structural</note>
    </ligand>
</feature>
<dbReference type="EMBL" id="CP001252">
    <property type="protein sequence ID" value="ACK46694.1"/>
    <property type="molecule type" value="Genomic_DNA"/>
</dbReference>
<dbReference type="RefSeq" id="WP_011846839.1">
    <property type="nucleotide sequence ID" value="NC_011663.1"/>
</dbReference>
<dbReference type="SMR" id="B8EET6"/>
<dbReference type="KEGG" id="sbp:Sbal223_2194"/>
<dbReference type="HOGENOM" id="CLU_114342_3_0_6"/>
<dbReference type="Proteomes" id="UP000002507">
    <property type="component" value="Chromosome"/>
</dbReference>
<dbReference type="GO" id="GO:0005886">
    <property type="term" value="C:plasma membrane"/>
    <property type="evidence" value="ECO:0007669"/>
    <property type="project" value="UniProtKB-SubCell"/>
</dbReference>
<dbReference type="GO" id="GO:0062054">
    <property type="term" value="F:fluoride channel activity"/>
    <property type="evidence" value="ECO:0007669"/>
    <property type="project" value="UniProtKB-UniRule"/>
</dbReference>
<dbReference type="GO" id="GO:0046872">
    <property type="term" value="F:metal ion binding"/>
    <property type="evidence" value="ECO:0007669"/>
    <property type="project" value="UniProtKB-KW"/>
</dbReference>
<dbReference type="GO" id="GO:0140114">
    <property type="term" value="P:cellular detoxification of fluoride"/>
    <property type="evidence" value="ECO:0007669"/>
    <property type="project" value="UniProtKB-UniRule"/>
</dbReference>
<dbReference type="HAMAP" id="MF_00454">
    <property type="entry name" value="FluC"/>
    <property type="match status" value="1"/>
</dbReference>
<dbReference type="InterPro" id="IPR003691">
    <property type="entry name" value="FluC"/>
</dbReference>
<dbReference type="NCBIfam" id="TIGR00494">
    <property type="entry name" value="crcB"/>
    <property type="match status" value="1"/>
</dbReference>
<dbReference type="PANTHER" id="PTHR28259">
    <property type="entry name" value="FLUORIDE EXPORT PROTEIN 1-RELATED"/>
    <property type="match status" value="1"/>
</dbReference>
<dbReference type="PANTHER" id="PTHR28259:SF1">
    <property type="entry name" value="FLUORIDE EXPORT PROTEIN 1-RELATED"/>
    <property type="match status" value="1"/>
</dbReference>
<dbReference type="Pfam" id="PF02537">
    <property type="entry name" value="CRCB"/>
    <property type="match status" value="1"/>
</dbReference>
<name>FLUC_SHEB2</name>
<proteinExistence type="inferred from homology"/>
<keyword id="KW-0997">Cell inner membrane</keyword>
<keyword id="KW-1003">Cell membrane</keyword>
<keyword id="KW-0407">Ion channel</keyword>
<keyword id="KW-0406">Ion transport</keyword>
<keyword id="KW-0472">Membrane</keyword>
<keyword id="KW-0479">Metal-binding</keyword>
<keyword id="KW-0915">Sodium</keyword>
<keyword id="KW-0812">Transmembrane</keyword>
<keyword id="KW-1133">Transmembrane helix</keyword>
<keyword id="KW-0813">Transport</keyword>
<organism>
    <name type="scientific">Shewanella baltica (strain OS223)</name>
    <dbReference type="NCBI Taxonomy" id="407976"/>
    <lineage>
        <taxon>Bacteria</taxon>
        <taxon>Pseudomonadati</taxon>
        <taxon>Pseudomonadota</taxon>
        <taxon>Gammaproteobacteria</taxon>
        <taxon>Alteromonadales</taxon>
        <taxon>Shewanellaceae</taxon>
        <taxon>Shewanella</taxon>
    </lineage>
</organism>
<reference key="1">
    <citation type="submission" date="2008-12" db="EMBL/GenBank/DDBJ databases">
        <title>Complete sequence of chromosome of Shewanella baltica OS223.</title>
        <authorList>
            <consortium name="US DOE Joint Genome Institute"/>
            <person name="Lucas S."/>
            <person name="Copeland A."/>
            <person name="Lapidus A."/>
            <person name="Glavina del Rio T."/>
            <person name="Dalin E."/>
            <person name="Tice H."/>
            <person name="Bruce D."/>
            <person name="Goodwin L."/>
            <person name="Pitluck S."/>
            <person name="Chertkov O."/>
            <person name="Meincke L."/>
            <person name="Brettin T."/>
            <person name="Detter J.C."/>
            <person name="Han C."/>
            <person name="Kuske C.R."/>
            <person name="Larimer F."/>
            <person name="Land M."/>
            <person name="Hauser L."/>
            <person name="Kyrpides N."/>
            <person name="Ovchinnikova G."/>
            <person name="Brettar I."/>
            <person name="Rodrigues J."/>
            <person name="Konstantinidis K."/>
            <person name="Tiedje J."/>
        </authorList>
    </citation>
    <scope>NUCLEOTIDE SEQUENCE [LARGE SCALE GENOMIC DNA]</scope>
    <source>
        <strain>OS223</strain>
    </source>
</reference>